<evidence type="ECO:0000255" key="1">
    <source>
        <dbReference type="HAMAP-Rule" id="MF_00238"/>
    </source>
</evidence>
<evidence type="ECO:0000305" key="2"/>
<protein>
    <recommendedName>
        <fullName evidence="1">Cytidylate kinase</fullName>
        <shortName evidence="1">CK</shortName>
        <ecNumber evidence="1">2.7.4.25</ecNumber>
    </recommendedName>
    <alternativeName>
        <fullName evidence="1">Cytidine monophosphate kinase</fullName>
        <shortName evidence="1">CMP kinase</shortName>
    </alternativeName>
</protein>
<name>KCY_HALH5</name>
<comment type="catalytic activity">
    <reaction evidence="1">
        <text>CMP + ATP = CDP + ADP</text>
        <dbReference type="Rhea" id="RHEA:11600"/>
        <dbReference type="ChEBI" id="CHEBI:30616"/>
        <dbReference type="ChEBI" id="CHEBI:58069"/>
        <dbReference type="ChEBI" id="CHEBI:60377"/>
        <dbReference type="ChEBI" id="CHEBI:456216"/>
        <dbReference type="EC" id="2.7.4.25"/>
    </reaction>
</comment>
<comment type="catalytic activity">
    <reaction evidence="1">
        <text>dCMP + ATP = dCDP + ADP</text>
        <dbReference type="Rhea" id="RHEA:25094"/>
        <dbReference type="ChEBI" id="CHEBI:30616"/>
        <dbReference type="ChEBI" id="CHEBI:57566"/>
        <dbReference type="ChEBI" id="CHEBI:58593"/>
        <dbReference type="ChEBI" id="CHEBI:456216"/>
        <dbReference type="EC" id="2.7.4.25"/>
    </reaction>
</comment>
<comment type="subcellular location">
    <subcellularLocation>
        <location evidence="1">Cytoplasm</location>
    </subcellularLocation>
</comment>
<comment type="similarity">
    <text evidence="1">Belongs to the cytidylate kinase family. Type 1 subfamily.</text>
</comment>
<comment type="sequence caution" evidence="2">
    <conflict type="erroneous initiation">
        <sequence resource="EMBL-CDS" id="BAA83919"/>
    </conflict>
</comment>
<keyword id="KW-0067">ATP-binding</keyword>
<keyword id="KW-0963">Cytoplasm</keyword>
<keyword id="KW-0418">Kinase</keyword>
<keyword id="KW-0547">Nucleotide-binding</keyword>
<keyword id="KW-1185">Reference proteome</keyword>
<keyword id="KW-0808">Transferase</keyword>
<sequence length="222" mass="24862">MKKMNIAIDGPAGAGKSTVAKQVAQALSFLYIDTGAMYRALTYAAIEHHVSPDDEASLKSLLDSIEIKLVDEQSKTRVYVNNTDVTDQVRTEEVTKTVSLVSSHGQVRKEMVRQQRLLAEGTNCVLDGRDIGTYVLPNAELKFFLTATVEERARRRYEENIQKGFKQSLEQLIKDIASRDEFDSNRSFAPLRKAEDAIEIDTTSLSISEVTQTIIGYVKERV</sequence>
<feature type="chain" id="PRO_0000131877" description="Cytidylate kinase">
    <location>
        <begin position="1"/>
        <end position="222"/>
    </location>
</feature>
<feature type="binding site" evidence="1">
    <location>
        <begin position="10"/>
        <end position="18"/>
    </location>
    <ligand>
        <name>ATP</name>
        <dbReference type="ChEBI" id="CHEBI:30616"/>
    </ligand>
</feature>
<dbReference type="EC" id="2.7.4.25" evidence="1"/>
<dbReference type="EMBL" id="BA000004">
    <property type="protein sequence ID" value="BAB05353.1"/>
    <property type="molecule type" value="Genomic_DNA"/>
</dbReference>
<dbReference type="EMBL" id="AB024552">
    <property type="protein sequence ID" value="BAA83919.1"/>
    <property type="status" value="ALT_INIT"/>
    <property type="molecule type" value="Genomic_DNA"/>
</dbReference>
<dbReference type="PIR" id="B83854">
    <property type="entry name" value="B83854"/>
</dbReference>
<dbReference type="RefSeq" id="WP_010897797.1">
    <property type="nucleotide sequence ID" value="NC_002570.2"/>
</dbReference>
<dbReference type="SMR" id="Q9RC80"/>
<dbReference type="STRING" id="272558.gene:10727532"/>
<dbReference type="KEGG" id="bha:BH1634"/>
<dbReference type="eggNOG" id="COG0283">
    <property type="taxonomic scope" value="Bacteria"/>
</dbReference>
<dbReference type="HOGENOM" id="CLU_079959_0_2_9"/>
<dbReference type="OrthoDB" id="9807434at2"/>
<dbReference type="Proteomes" id="UP000001258">
    <property type="component" value="Chromosome"/>
</dbReference>
<dbReference type="GO" id="GO:0005829">
    <property type="term" value="C:cytosol"/>
    <property type="evidence" value="ECO:0007669"/>
    <property type="project" value="TreeGrafter"/>
</dbReference>
<dbReference type="GO" id="GO:0005524">
    <property type="term" value="F:ATP binding"/>
    <property type="evidence" value="ECO:0007669"/>
    <property type="project" value="UniProtKB-UniRule"/>
</dbReference>
<dbReference type="GO" id="GO:0036430">
    <property type="term" value="F:CMP kinase activity"/>
    <property type="evidence" value="ECO:0007669"/>
    <property type="project" value="RHEA"/>
</dbReference>
<dbReference type="GO" id="GO:0036431">
    <property type="term" value="F:dCMP kinase activity"/>
    <property type="evidence" value="ECO:0007669"/>
    <property type="project" value="RHEA"/>
</dbReference>
<dbReference type="GO" id="GO:0015949">
    <property type="term" value="P:nucleobase-containing small molecule interconversion"/>
    <property type="evidence" value="ECO:0007669"/>
    <property type="project" value="TreeGrafter"/>
</dbReference>
<dbReference type="GO" id="GO:0006220">
    <property type="term" value="P:pyrimidine nucleotide metabolic process"/>
    <property type="evidence" value="ECO:0007669"/>
    <property type="project" value="UniProtKB-UniRule"/>
</dbReference>
<dbReference type="CDD" id="cd02020">
    <property type="entry name" value="CMPK"/>
    <property type="match status" value="1"/>
</dbReference>
<dbReference type="Gene3D" id="3.40.50.300">
    <property type="entry name" value="P-loop containing nucleotide triphosphate hydrolases"/>
    <property type="match status" value="1"/>
</dbReference>
<dbReference type="HAMAP" id="MF_00238">
    <property type="entry name" value="Cytidyl_kinase_type1"/>
    <property type="match status" value="1"/>
</dbReference>
<dbReference type="InterPro" id="IPR003136">
    <property type="entry name" value="Cytidylate_kin"/>
</dbReference>
<dbReference type="InterPro" id="IPR011994">
    <property type="entry name" value="Cytidylate_kinase_dom"/>
</dbReference>
<dbReference type="InterPro" id="IPR027417">
    <property type="entry name" value="P-loop_NTPase"/>
</dbReference>
<dbReference type="NCBIfam" id="TIGR00017">
    <property type="entry name" value="cmk"/>
    <property type="match status" value="1"/>
</dbReference>
<dbReference type="PANTHER" id="PTHR21299:SF2">
    <property type="entry name" value="CYTIDYLATE KINASE"/>
    <property type="match status" value="1"/>
</dbReference>
<dbReference type="PANTHER" id="PTHR21299">
    <property type="entry name" value="CYTIDYLATE KINASE/PANTOATE-BETA-ALANINE LIGASE"/>
    <property type="match status" value="1"/>
</dbReference>
<dbReference type="Pfam" id="PF02224">
    <property type="entry name" value="Cytidylate_kin"/>
    <property type="match status" value="1"/>
</dbReference>
<dbReference type="SUPFAM" id="SSF52540">
    <property type="entry name" value="P-loop containing nucleoside triphosphate hydrolases"/>
    <property type="match status" value="1"/>
</dbReference>
<reference key="1">
    <citation type="journal article" date="2000" name="Nucleic Acids Res.">
        <title>Complete genome sequence of the alkaliphilic bacterium Bacillus halodurans and genomic sequence comparison with Bacillus subtilis.</title>
        <authorList>
            <person name="Takami H."/>
            <person name="Nakasone K."/>
            <person name="Takaki Y."/>
            <person name="Maeno G."/>
            <person name="Sasaki R."/>
            <person name="Masui N."/>
            <person name="Fuji F."/>
            <person name="Hirama C."/>
            <person name="Nakamura Y."/>
            <person name="Ogasawara N."/>
            <person name="Kuhara S."/>
            <person name="Horikoshi K."/>
        </authorList>
    </citation>
    <scope>NUCLEOTIDE SEQUENCE [LARGE SCALE GENOMIC DNA]</scope>
    <source>
        <strain>ATCC BAA-125 / DSM 18197 / FERM 7344 / JCM 9153 / C-125</strain>
    </source>
</reference>
<reference key="2">
    <citation type="journal article" date="1999" name="Extremophiles">
        <title>Genetic analysis of the chromosome of alkaliphilic Bacillus halodurans C-125.</title>
        <authorList>
            <person name="Takami H."/>
            <person name="Takaki Y."/>
            <person name="Nakasone K."/>
            <person name="Sakiyama T."/>
            <person name="Maeno G."/>
            <person name="Sasaki R."/>
            <person name="Hirama C."/>
            <person name="Fuji F."/>
            <person name="Masui N."/>
        </authorList>
    </citation>
    <scope>NUCLEOTIDE SEQUENCE [GENOMIC DNA] OF 1-168</scope>
    <source>
        <strain>ATCC BAA-125 / DSM 18197 / FERM 7344 / JCM 9153 / C-125</strain>
    </source>
</reference>
<accession>Q9RC80</accession>
<accession>Q9KCD8</accession>
<organism>
    <name type="scientific">Halalkalibacterium halodurans (strain ATCC BAA-125 / DSM 18197 / FERM 7344 / JCM 9153 / C-125)</name>
    <name type="common">Bacillus halodurans</name>
    <dbReference type="NCBI Taxonomy" id="272558"/>
    <lineage>
        <taxon>Bacteria</taxon>
        <taxon>Bacillati</taxon>
        <taxon>Bacillota</taxon>
        <taxon>Bacilli</taxon>
        <taxon>Bacillales</taxon>
        <taxon>Bacillaceae</taxon>
        <taxon>Halalkalibacterium (ex Joshi et al. 2022)</taxon>
    </lineage>
</organism>
<proteinExistence type="inferred from homology"/>
<gene>
    <name evidence="1" type="primary">cmk</name>
    <name type="ordered locus">BH1634</name>
</gene>